<name>RL21_BURCM</name>
<organism>
    <name type="scientific">Burkholderia ambifaria (strain ATCC BAA-244 / DSM 16087 / CCUG 44356 / LMG 19182 / AMMD)</name>
    <name type="common">Burkholderia cepacia (strain AMMD)</name>
    <dbReference type="NCBI Taxonomy" id="339670"/>
    <lineage>
        <taxon>Bacteria</taxon>
        <taxon>Pseudomonadati</taxon>
        <taxon>Pseudomonadota</taxon>
        <taxon>Betaproteobacteria</taxon>
        <taxon>Burkholderiales</taxon>
        <taxon>Burkholderiaceae</taxon>
        <taxon>Burkholderia</taxon>
        <taxon>Burkholderia cepacia complex</taxon>
    </lineage>
</organism>
<accession>Q0BII0</accession>
<comment type="function">
    <text evidence="1">This protein binds to 23S rRNA in the presence of protein L20.</text>
</comment>
<comment type="subunit">
    <text evidence="1">Part of the 50S ribosomal subunit. Contacts protein L20.</text>
</comment>
<comment type="similarity">
    <text evidence="1">Belongs to the bacterial ribosomal protein bL21 family.</text>
</comment>
<dbReference type="EMBL" id="CP000440">
    <property type="protein sequence ID" value="ABI86043.1"/>
    <property type="molecule type" value="Genomic_DNA"/>
</dbReference>
<dbReference type="RefSeq" id="WP_006025184.1">
    <property type="nucleotide sequence ID" value="NZ_CP009798.1"/>
</dbReference>
<dbReference type="SMR" id="Q0BII0"/>
<dbReference type="GeneID" id="98106574"/>
<dbReference type="KEGG" id="bam:Bamb_0484"/>
<dbReference type="PATRIC" id="fig|339670.21.peg.1122"/>
<dbReference type="eggNOG" id="COG0261">
    <property type="taxonomic scope" value="Bacteria"/>
</dbReference>
<dbReference type="Proteomes" id="UP000000662">
    <property type="component" value="Chromosome 1"/>
</dbReference>
<dbReference type="GO" id="GO:0005737">
    <property type="term" value="C:cytoplasm"/>
    <property type="evidence" value="ECO:0007669"/>
    <property type="project" value="UniProtKB-ARBA"/>
</dbReference>
<dbReference type="GO" id="GO:1990904">
    <property type="term" value="C:ribonucleoprotein complex"/>
    <property type="evidence" value="ECO:0007669"/>
    <property type="project" value="UniProtKB-KW"/>
</dbReference>
<dbReference type="GO" id="GO:0005840">
    <property type="term" value="C:ribosome"/>
    <property type="evidence" value="ECO:0007669"/>
    <property type="project" value="UniProtKB-KW"/>
</dbReference>
<dbReference type="GO" id="GO:0019843">
    <property type="term" value="F:rRNA binding"/>
    <property type="evidence" value="ECO:0007669"/>
    <property type="project" value="UniProtKB-UniRule"/>
</dbReference>
<dbReference type="GO" id="GO:0003735">
    <property type="term" value="F:structural constituent of ribosome"/>
    <property type="evidence" value="ECO:0007669"/>
    <property type="project" value="InterPro"/>
</dbReference>
<dbReference type="GO" id="GO:0006412">
    <property type="term" value="P:translation"/>
    <property type="evidence" value="ECO:0007669"/>
    <property type="project" value="UniProtKB-UniRule"/>
</dbReference>
<dbReference type="HAMAP" id="MF_01363">
    <property type="entry name" value="Ribosomal_bL21"/>
    <property type="match status" value="1"/>
</dbReference>
<dbReference type="InterPro" id="IPR028909">
    <property type="entry name" value="bL21-like"/>
</dbReference>
<dbReference type="InterPro" id="IPR036164">
    <property type="entry name" value="bL21-like_sf"/>
</dbReference>
<dbReference type="InterPro" id="IPR001787">
    <property type="entry name" value="Ribosomal_bL21"/>
</dbReference>
<dbReference type="InterPro" id="IPR018258">
    <property type="entry name" value="Ribosomal_bL21_CS"/>
</dbReference>
<dbReference type="NCBIfam" id="TIGR00061">
    <property type="entry name" value="L21"/>
    <property type="match status" value="1"/>
</dbReference>
<dbReference type="PANTHER" id="PTHR21349">
    <property type="entry name" value="50S RIBOSOMAL PROTEIN L21"/>
    <property type="match status" value="1"/>
</dbReference>
<dbReference type="PANTHER" id="PTHR21349:SF0">
    <property type="entry name" value="LARGE RIBOSOMAL SUBUNIT PROTEIN BL21M"/>
    <property type="match status" value="1"/>
</dbReference>
<dbReference type="Pfam" id="PF00829">
    <property type="entry name" value="Ribosomal_L21p"/>
    <property type="match status" value="1"/>
</dbReference>
<dbReference type="SUPFAM" id="SSF141091">
    <property type="entry name" value="L21p-like"/>
    <property type="match status" value="1"/>
</dbReference>
<dbReference type="PROSITE" id="PS01169">
    <property type="entry name" value="RIBOSOMAL_L21"/>
    <property type="match status" value="1"/>
</dbReference>
<proteinExistence type="inferred from homology"/>
<keyword id="KW-0687">Ribonucleoprotein</keyword>
<keyword id="KW-0689">Ribosomal protein</keyword>
<keyword id="KW-0694">RNA-binding</keyword>
<keyword id="KW-0699">rRNA-binding</keyword>
<reference key="1">
    <citation type="submission" date="2006-08" db="EMBL/GenBank/DDBJ databases">
        <title>Complete sequence of chromosome 1 of Burkholderia cepacia AMMD.</title>
        <authorList>
            <person name="Copeland A."/>
            <person name="Lucas S."/>
            <person name="Lapidus A."/>
            <person name="Barry K."/>
            <person name="Detter J.C."/>
            <person name="Glavina del Rio T."/>
            <person name="Hammon N."/>
            <person name="Israni S."/>
            <person name="Pitluck S."/>
            <person name="Bruce D."/>
            <person name="Chain P."/>
            <person name="Malfatti S."/>
            <person name="Shin M."/>
            <person name="Vergez L."/>
            <person name="Schmutz J."/>
            <person name="Larimer F."/>
            <person name="Land M."/>
            <person name="Hauser L."/>
            <person name="Kyrpides N."/>
            <person name="Kim E."/>
            <person name="Parke J."/>
            <person name="Coenye T."/>
            <person name="Konstantinidis K."/>
            <person name="Ramette A."/>
            <person name="Tiedje J."/>
            <person name="Richardson P."/>
        </authorList>
    </citation>
    <scope>NUCLEOTIDE SEQUENCE [LARGE SCALE GENOMIC DNA]</scope>
    <source>
        <strain>ATCC BAA-244 / DSM 16087 / CCUG 44356 / LMG 19182 / AMMD</strain>
    </source>
</reference>
<protein>
    <recommendedName>
        <fullName evidence="1">Large ribosomal subunit protein bL21</fullName>
    </recommendedName>
    <alternativeName>
        <fullName evidence="2">50S ribosomal protein L21</fullName>
    </alternativeName>
</protein>
<sequence length="103" mass="11356">MYAVIKTGGKQYKVAVGEKLKVEQIPADIDAEITLDQVLAVGEGESIKFGTPLVSGASVKATVVSHGRHAKVTIFKMRRRKHYQKHGGHRQNYTELRIDAINA</sequence>
<evidence type="ECO:0000255" key="1">
    <source>
        <dbReference type="HAMAP-Rule" id="MF_01363"/>
    </source>
</evidence>
<evidence type="ECO:0000305" key="2"/>
<feature type="chain" id="PRO_1000067810" description="Large ribosomal subunit protein bL21">
    <location>
        <begin position="1"/>
        <end position="103"/>
    </location>
</feature>
<gene>
    <name evidence="1" type="primary">rplU</name>
    <name type="ordered locus">Bamb_0484</name>
</gene>